<accession>Q8P8J5</accession>
<protein>
    <recommendedName>
        <fullName evidence="5 7">N-acetyl-L-citrulline deacetylase</fullName>
        <shortName evidence="5">ACDase</shortName>
        <shortName evidence="5">Acetylcitrulline deacetylase</shortName>
        <ecNumber evidence="2 3">3.5.1.-</ecNumber>
    </recommendedName>
</protein>
<dbReference type="EC" id="3.5.1.-" evidence="2 3"/>
<dbReference type="EMBL" id="AE008922">
    <property type="protein sequence ID" value="AAM41525.1"/>
    <property type="molecule type" value="Genomic_DNA"/>
</dbReference>
<dbReference type="RefSeq" id="NP_637601.1">
    <property type="nucleotide sequence ID" value="NC_003902.1"/>
</dbReference>
<dbReference type="RefSeq" id="WP_011037390.1">
    <property type="nucleotide sequence ID" value="NC_003902.1"/>
</dbReference>
<dbReference type="PDB" id="2F7V">
    <property type="method" value="X-ray"/>
    <property type="resolution" value="1.75 A"/>
    <property type="chains" value="A=1-366"/>
</dbReference>
<dbReference type="PDB" id="2F8H">
    <property type="method" value="X-ray"/>
    <property type="resolution" value="1.75 A"/>
    <property type="chains" value="A=1-366"/>
</dbReference>
<dbReference type="PDBsum" id="2F7V"/>
<dbReference type="PDBsum" id="2F8H"/>
<dbReference type="SMR" id="Q8P8J5"/>
<dbReference type="STRING" id="190485.XCC2246"/>
<dbReference type="EnsemblBacteria" id="AAM41525">
    <property type="protein sequence ID" value="AAM41525"/>
    <property type="gene ID" value="XCC2246"/>
</dbReference>
<dbReference type="KEGG" id="xcc:XCC2246"/>
<dbReference type="PATRIC" id="fig|190485.4.peg.2396"/>
<dbReference type="eggNOG" id="COG0624">
    <property type="taxonomic scope" value="Bacteria"/>
</dbReference>
<dbReference type="HOGENOM" id="CLU_021802_2_0_6"/>
<dbReference type="OrthoDB" id="3665926at2"/>
<dbReference type="BioCyc" id="MetaCyc:MONOMER-12074"/>
<dbReference type="UniPathway" id="UPA00068"/>
<dbReference type="EvolutionaryTrace" id="Q8P8J5"/>
<dbReference type="Proteomes" id="UP000001010">
    <property type="component" value="Chromosome"/>
</dbReference>
<dbReference type="GO" id="GO:0008777">
    <property type="term" value="F:acetylornithine deacetylase activity"/>
    <property type="evidence" value="ECO:0000318"/>
    <property type="project" value="GO_Central"/>
</dbReference>
<dbReference type="GO" id="GO:0050897">
    <property type="term" value="F:cobalt ion binding"/>
    <property type="evidence" value="ECO:0007669"/>
    <property type="project" value="UniProtKB-UniRule"/>
</dbReference>
<dbReference type="GO" id="GO:0043909">
    <property type="term" value="F:N-acetylcitrulline deacetylase activity"/>
    <property type="evidence" value="ECO:0007669"/>
    <property type="project" value="RHEA"/>
</dbReference>
<dbReference type="GO" id="GO:0006526">
    <property type="term" value="P:L-arginine biosynthetic process"/>
    <property type="evidence" value="ECO:0000318"/>
    <property type="project" value="GO_Central"/>
</dbReference>
<dbReference type="CDD" id="cd03894">
    <property type="entry name" value="M20_ArgE"/>
    <property type="match status" value="1"/>
</dbReference>
<dbReference type="Gene3D" id="3.30.70.360">
    <property type="match status" value="1"/>
</dbReference>
<dbReference type="Gene3D" id="3.40.630.10">
    <property type="entry name" value="Zn peptidases"/>
    <property type="match status" value="1"/>
</dbReference>
<dbReference type="HAMAP" id="MF_02236">
    <property type="entry name" value="ACDase"/>
    <property type="match status" value="1"/>
</dbReference>
<dbReference type="InterPro" id="IPR043697">
    <property type="entry name" value="ACDase_ArgE'-like"/>
</dbReference>
<dbReference type="InterPro" id="IPR036264">
    <property type="entry name" value="Bact_exopeptidase_dim_dom"/>
</dbReference>
<dbReference type="InterPro" id="IPR002933">
    <property type="entry name" value="Peptidase_M20"/>
</dbReference>
<dbReference type="InterPro" id="IPR011650">
    <property type="entry name" value="Peptidase_M20_dimer"/>
</dbReference>
<dbReference type="InterPro" id="IPR050072">
    <property type="entry name" value="Peptidase_M20A"/>
</dbReference>
<dbReference type="NCBIfam" id="NF006439">
    <property type="entry name" value="PRK08737.1"/>
    <property type="match status" value="1"/>
</dbReference>
<dbReference type="PANTHER" id="PTHR43808">
    <property type="entry name" value="ACETYLORNITHINE DEACETYLASE"/>
    <property type="match status" value="1"/>
</dbReference>
<dbReference type="PANTHER" id="PTHR43808:SF31">
    <property type="entry name" value="N-ACETYL-L-CITRULLINE DEACETYLASE"/>
    <property type="match status" value="1"/>
</dbReference>
<dbReference type="Pfam" id="PF07687">
    <property type="entry name" value="M20_dimer"/>
    <property type="match status" value="1"/>
</dbReference>
<dbReference type="Pfam" id="PF01546">
    <property type="entry name" value="Peptidase_M20"/>
    <property type="match status" value="1"/>
</dbReference>
<dbReference type="SUPFAM" id="SSF55031">
    <property type="entry name" value="Bacterial exopeptidase dimerisation domain"/>
    <property type="match status" value="1"/>
</dbReference>
<dbReference type="SUPFAM" id="SSF53187">
    <property type="entry name" value="Zn-dependent exopeptidases"/>
    <property type="match status" value="1"/>
</dbReference>
<feature type="chain" id="PRO_0000448223" description="N-acetyl-L-citrulline deacetylase">
    <location>
        <begin position="1"/>
        <end position="366"/>
    </location>
</feature>
<feature type="active site" description="Proton donor/acceptor" evidence="11">
    <location>
        <position position="130"/>
    </location>
</feature>
<feature type="binding site" evidence="4">
    <location>
        <position position="72"/>
    </location>
    <ligand>
        <name>Co(2+)</name>
        <dbReference type="ChEBI" id="CHEBI:48828"/>
    </ligand>
</feature>
<feature type="binding site" evidence="4">
    <location>
        <position position="103"/>
    </location>
    <ligand>
        <name>Co(2+)</name>
        <dbReference type="ChEBI" id="CHEBI:48828"/>
    </ligand>
</feature>
<feature type="binding site" evidence="4">
    <location>
        <position position="155"/>
    </location>
    <ligand>
        <name>Co(2+)</name>
        <dbReference type="ChEBI" id="CHEBI:48828"/>
    </ligand>
</feature>
<feature type="helix" evidence="14">
    <location>
        <begin position="3"/>
        <end position="17"/>
    </location>
</feature>
<feature type="turn" evidence="14">
    <location>
        <begin position="22"/>
        <end position="25"/>
    </location>
</feature>
<feature type="strand" evidence="14">
    <location>
        <begin position="29"/>
        <end position="31"/>
    </location>
</feature>
<feature type="helix" evidence="14">
    <location>
        <begin position="32"/>
        <end position="38"/>
    </location>
</feature>
<feature type="strand" evidence="14">
    <location>
        <begin position="45"/>
        <end position="50"/>
    </location>
</feature>
<feature type="strand" evidence="14">
    <location>
        <begin position="56"/>
        <end position="63"/>
    </location>
</feature>
<feature type="strand" evidence="14">
    <location>
        <begin position="66"/>
        <end position="72"/>
    </location>
</feature>
<feature type="strand" evidence="14">
    <location>
        <begin position="93"/>
        <end position="97"/>
    </location>
</feature>
<feature type="turn" evidence="14">
    <location>
        <begin position="99"/>
        <end position="104"/>
    </location>
</feature>
<feature type="helix" evidence="14">
    <location>
        <begin position="105"/>
        <end position="115"/>
    </location>
</feature>
<feature type="strand" evidence="14">
    <location>
        <begin position="122"/>
        <end position="128"/>
    </location>
</feature>
<feature type="strand" evidence="14">
    <location>
        <begin position="132"/>
        <end position="134"/>
    </location>
</feature>
<feature type="helix" evidence="14">
    <location>
        <begin position="137"/>
        <end position="142"/>
    </location>
</feature>
<feature type="strand" evidence="14">
    <location>
        <begin position="149"/>
        <end position="153"/>
    </location>
</feature>
<feature type="strand" evidence="14">
    <location>
        <begin position="168"/>
        <end position="176"/>
    </location>
</feature>
<feature type="helix" evidence="14">
    <location>
        <begin position="192"/>
        <end position="209"/>
    </location>
</feature>
<feature type="turn" evidence="14">
    <location>
        <begin position="210"/>
        <end position="212"/>
    </location>
</feature>
<feature type="strand" evidence="14">
    <location>
        <begin position="218"/>
        <end position="220"/>
    </location>
</feature>
<feature type="strand" evidence="14">
    <location>
        <begin position="222"/>
        <end position="230"/>
    </location>
</feature>
<feature type="strand" evidence="14">
    <location>
        <begin position="239"/>
        <end position="248"/>
    </location>
</feature>
<feature type="helix" evidence="14">
    <location>
        <begin position="255"/>
        <end position="264"/>
    </location>
</feature>
<feature type="strand" evidence="14">
    <location>
        <begin position="271"/>
        <end position="279"/>
    </location>
</feature>
<feature type="helix" evidence="14">
    <location>
        <begin position="287"/>
        <end position="303"/>
    </location>
</feature>
<feature type="strand" evidence="14">
    <location>
        <begin position="312"/>
        <end position="314"/>
    </location>
</feature>
<feature type="helix" evidence="14">
    <location>
        <begin position="318"/>
        <end position="323"/>
    </location>
</feature>
<feature type="strand" evidence="14">
    <location>
        <begin position="328"/>
        <end position="330"/>
    </location>
</feature>
<feature type="helix" evidence="14">
    <location>
        <begin position="336"/>
        <end position="338"/>
    </location>
</feature>
<feature type="strand" evidence="14">
    <location>
        <begin position="345"/>
        <end position="347"/>
    </location>
</feature>
<feature type="helix" evidence="14">
    <location>
        <begin position="348"/>
        <end position="363"/>
    </location>
</feature>
<sequence length="366" mass="38841">MTDLLASTLEHLETLVSFDTRNPPRAIAAEGGIFDYLRAQLPGFQVEVIDHGDGAVSLYAVRGTPKYLFNVHLDTVPDSPHWSADPHVMRRTEDRVIGLGVCDIKGAAAALVAAANAGDGDAAFLFSSDEEANDPRCIAAFLARGLPYDAVLVAEPTMSEAVLAHRGISSVLMRFAGRAGHASGKQDPAASALHQAMRWGGKALDHVESLAHARFGGLTGLRFNIGRVDGGIKANMIAPAAELRFGFRPLPSMDVDGLLATFAGFADPAAAHFEETFRGPSLPSGDIARAEERRLAARDVADALDLPIGNAVDFWTEASLFSAGGYTALVYGPGDIAQAHTADEFVTLAQLQRYVESVNRIINGSH</sequence>
<comment type="function">
    <text evidence="2 3">Catalyzes the deacetylation of N-acetyl-L-citrulline to produce L-citrulline. This is a step in an alternative arginine biosynthesis pathway (PubMed:16511126, PubMed:16585758). Is also able to catalyze the deacetylation of N-acetylornithine in vitro, with almost equal velocity. However, this reaction may be not relevant in vivo since Xanthomonas does not possess the canonical argF gene and cannot convert ornithine to citrulline via ArgF' (PubMed:16585758).</text>
</comment>
<comment type="catalytic activity">
    <reaction evidence="2 3">
        <text>N(2)-acetyl-L-citrulline + H2O = L-citrulline + acetate</text>
        <dbReference type="Rhea" id="RHEA:61092"/>
        <dbReference type="ChEBI" id="CHEBI:15377"/>
        <dbReference type="ChEBI" id="CHEBI:30089"/>
        <dbReference type="ChEBI" id="CHEBI:57743"/>
        <dbReference type="ChEBI" id="CHEBI:58765"/>
    </reaction>
    <physiologicalReaction direction="left-to-right" evidence="9 10">
        <dbReference type="Rhea" id="RHEA:61093"/>
    </physiologicalReaction>
</comment>
<comment type="catalytic activity">
    <reaction evidence="3">
        <text>N(2)-acetyl-L-ornithine + H2O = L-ornithine + acetate</text>
        <dbReference type="Rhea" id="RHEA:15941"/>
        <dbReference type="ChEBI" id="CHEBI:15377"/>
        <dbReference type="ChEBI" id="CHEBI:30089"/>
        <dbReference type="ChEBI" id="CHEBI:46911"/>
        <dbReference type="ChEBI" id="CHEBI:57805"/>
    </reaction>
</comment>
<comment type="cofactor">
    <cofactor evidence="4">
        <name>Co(2+)</name>
        <dbReference type="ChEBI" id="CHEBI:48828"/>
    </cofactor>
    <text evidence="4">Binds 1 Co(2+) ion per subunit.</text>
</comment>
<comment type="pathway">
    <text evidence="9 10">Amino-acid biosynthesis; L-arginine biosynthesis.</text>
</comment>
<comment type="subunit">
    <text evidence="4">Forms homodimers in the crystal, but higher order oligomers may form in solution.</text>
</comment>
<comment type="domain">
    <text evidence="4">Consists of two domains, a catalytic domain (formed by residues 1-166 and 286-365 from the N and C termini, respectively) and a dimerization domain (residues 167-285).</text>
</comment>
<comment type="similarity">
    <text evidence="1 8">Belongs to the peptidase M20A family. N-acetylcitrulline deacetylase subfamily.</text>
</comment>
<organism>
    <name type="scientific">Xanthomonas campestris pv. campestris (strain ATCC 33913 / DSM 3586 / NCPPB 528 / LMG 568 / P 25)</name>
    <dbReference type="NCBI Taxonomy" id="190485"/>
    <lineage>
        <taxon>Bacteria</taxon>
        <taxon>Pseudomonadati</taxon>
        <taxon>Pseudomonadota</taxon>
        <taxon>Gammaproteobacteria</taxon>
        <taxon>Lysobacterales</taxon>
        <taxon>Lysobacteraceae</taxon>
        <taxon>Xanthomonas</taxon>
    </lineage>
</organism>
<name>ACDAS_XANCP</name>
<gene>
    <name evidence="5 7" type="primary">argE'</name>
    <name evidence="6 12" type="synonym">argE</name>
    <name evidence="12" type="ordered locus">XCC2246</name>
</gene>
<evidence type="ECO:0000255" key="1">
    <source>
        <dbReference type="HAMAP-Rule" id="MF_02236"/>
    </source>
</evidence>
<evidence type="ECO:0000269" key="2">
    <source>
    </source>
</evidence>
<evidence type="ECO:0000269" key="3">
    <source>
    </source>
</evidence>
<evidence type="ECO:0000269" key="4">
    <source>
    </source>
</evidence>
<evidence type="ECO:0000303" key="5">
    <source>
    </source>
</evidence>
<evidence type="ECO:0000303" key="6">
    <source>
    </source>
</evidence>
<evidence type="ECO:0000303" key="7">
    <source>
    </source>
</evidence>
<evidence type="ECO:0000305" key="8"/>
<evidence type="ECO:0000305" key="9">
    <source>
    </source>
</evidence>
<evidence type="ECO:0000305" key="10">
    <source>
    </source>
</evidence>
<evidence type="ECO:0000305" key="11">
    <source>
    </source>
</evidence>
<evidence type="ECO:0000312" key="12">
    <source>
        <dbReference type="EMBL" id="AAM41525.1"/>
    </source>
</evidence>
<evidence type="ECO:0007744" key="13">
    <source>
        <dbReference type="PDB" id="2F7V"/>
    </source>
</evidence>
<evidence type="ECO:0007829" key="14">
    <source>
        <dbReference type="PDB" id="2F7V"/>
    </source>
</evidence>
<proteinExistence type="evidence at protein level"/>
<reference key="1">
    <citation type="journal article" date="2002" name="Nature">
        <title>Comparison of the genomes of two Xanthomonas pathogens with differing host specificities.</title>
        <authorList>
            <person name="da Silva A.C.R."/>
            <person name="Ferro J.A."/>
            <person name="Reinach F.C."/>
            <person name="Farah C.S."/>
            <person name="Furlan L.R."/>
            <person name="Quaggio R.B."/>
            <person name="Monteiro-Vitorello C.B."/>
            <person name="Van Sluys M.A."/>
            <person name="Almeida N.F. Jr."/>
            <person name="Alves L.M.C."/>
            <person name="do Amaral A.M."/>
            <person name="Bertolini M.C."/>
            <person name="Camargo L.E.A."/>
            <person name="Camarotte G."/>
            <person name="Cannavan F."/>
            <person name="Cardozo J."/>
            <person name="Chambergo F."/>
            <person name="Ciapina L.P."/>
            <person name="Cicarelli R.M.B."/>
            <person name="Coutinho L.L."/>
            <person name="Cursino-Santos J.R."/>
            <person name="El-Dorry H."/>
            <person name="Faria J.B."/>
            <person name="Ferreira A.J.S."/>
            <person name="Ferreira R.C.C."/>
            <person name="Ferro M.I.T."/>
            <person name="Formighieri E.F."/>
            <person name="Franco M.C."/>
            <person name="Greggio C.C."/>
            <person name="Gruber A."/>
            <person name="Katsuyama A.M."/>
            <person name="Kishi L.T."/>
            <person name="Leite R.P."/>
            <person name="Lemos E.G.M."/>
            <person name="Lemos M.V.F."/>
            <person name="Locali E.C."/>
            <person name="Machado M.A."/>
            <person name="Madeira A.M.B.N."/>
            <person name="Martinez-Rossi N.M."/>
            <person name="Martins E.C."/>
            <person name="Meidanis J."/>
            <person name="Menck C.F.M."/>
            <person name="Miyaki C.Y."/>
            <person name="Moon D.H."/>
            <person name="Moreira L.M."/>
            <person name="Novo M.T.M."/>
            <person name="Okura V.K."/>
            <person name="Oliveira M.C."/>
            <person name="Oliveira V.R."/>
            <person name="Pereira H.A."/>
            <person name="Rossi A."/>
            <person name="Sena J.A.D."/>
            <person name="Silva C."/>
            <person name="de Souza R.F."/>
            <person name="Spinola L.A.F."/>
            <person name="Takita M.A."/>
            <person name="Tamura R.E."/>
            <person name="Teixeira E.C."/>
            <person name="Tezza R.I.D."/>
            <person name="Trindade dos Santos M."/>
            <person name="Truffi D."/>
            <person name="Tsai S.M."/>
            <person name="White F.F."/>
            <person name="Setubal J.C."/>
            <person name="Kitajima J.P."/>
        </authorList>
    </citation>
    <scope>NUCLEOTIDE SEQUENCE [LARGE SCALE GENOMIC DNA]</scope>
    <source>
        <strain>ATCC 33913 / DSM 3586 / NCPPB 528 / LMG 568 / P 25</strain>
    </source>
</reference>
<reference key="2">
    <citation type="journal article" date="2005" name="Acta Crystallogr. F">
        <title>Expression, purification, crystallization and preliminary X-ray crystallographic studies of a novel acetylcitrulline deacetylase from Xanthomonas campestris.</title>
        <authorList>
            <person name="Shi D."/>
            <person name="Yu X."/>
            <person name="Roth L."/>
            <person name="Morizono H."/>
            <person name="Hathout Y."/>
            <person name="Allewell N.M."/>
            <person name="Tuchman M."/>
        </authorList>
    </citation>
    <scope>FUNCTION</scope>
    <scope>CATALYTIC ACTIVITY</scope>
    <scope>PATHWAY</scope>
    <source>
        <strain>ATCC 33913 / DSM 3586 / NCPPB 528 / LMG 568 / P 25</strain>
    </source>
</reference>
<reference key="3">
    <citation type="journal article" date="2006" name="J. Bacteriol.">
        <title>Acetylornithine transcarbamylase: a novel enzyme in arginine biosynthesis.</title>
        <authorList>
            <person name="Morizono H."/>
            <person name="Cabrera-Luque J."/>
            <person name="Shi D."/>
            <person name="Gallegos R."/>
            <person name="Yamaguchi S."/>
            <person name="Yu X."/>
            <person name="Allewell N.M."/>
            <person name="Malamy M.H."/>
            <person name="Tuchman M."/>
        </authorList>
    </citation>
    <scope>FUNCTION</scope>
    <scope>CATALYTIC ACTIVITY</scope>
    <scope>PATHWAY</scope>
    <source>
        <strain>ATCC 33913 / DSM 3586 / NCPPB 528 / LMG 568 / P 25</strain>
    </source>
</reference>
<reference evidence="13" key="4">
    <citation type="journal article" date="2007" name="Biophys. Chem.">
        <title>Structure of a novel N-acetyl-L-citrulline deacetylase from Xanthomonas campestris.</title>
        <authorList>
            <person name="Shi D."/>
            <person name="Yu X."/>
            <person name="Roth L."/>
            <person name="Tuchman M."/>
            <person name="Allewell N.M."/>
        </authorList>
    </citation>
    <scope>X-RAY CRYSTALLOGRAPHY (1.75 ANGSTROMS) OF APOENZYME AND IN COMPLEX WITH COBALT</scope>
    <scope>COFACTOR</scope>
    <scope>SUBUNIT</scope>
    <scope>DOMAIN</scope>
    <scope>REACTION MECHANISM</scope>
    <scope>ACTIVE SITE</scope>
    <scope>3D-STRUCTURE MODELING</scope>
    <source>
        <strain>ATCC 33913 / DSM 3586 / NCPPB 528 / LMG 568 / P 25</strain>
    </source>
</reference>
<keyword id="KW-0002">3D-structure</keyword>
<keyword id="KW-0028">Amino-acid biosynthesis</keyword>
<keyword id="KW-0055">Arginine biosynthesis</keyword>
<keyword id="KW-0170">Cobalt</keyword>
<keyword id="KW-0378">Hydrolase</keyword>
<keyword id="KW-0479">Metal-binding</keyword>
<keyword id="KW-1185">Reference proteome</keyword>